<gene>
    <name type="primary">hisK</name>
    <name type="ordered locus">DR_0470</name>
</gene>
<accession>Q9RX45</accession>
<feature type="chain" id="PRO_0000122318" description="Probable histidinol-phosphatase">
    <location>
        <begin position="1"/>
        <end position="260"/>
    </location>
</feature>
<sequence>MTGLCDSHLHTPLCGHATGTPREYAQAALDAGLSGLCFTDHMPMPRWYDAPWRMKLEQLPEYIAEIQAVQQEFAGRLDVRLGLEADFHPGTEKFVEKVLGMFDWDYVIGSVHYLGAWGFDNPEFVAEYEERDLGGLYRDYYALVEGAARSGLFDAIGHLDLPKKFGHLDPDPVYALHALDVVAGQGLALDFNTAGWRKPVAEAYPAPDLVRAAAERGIPFVLGSDAHQPGEVGFRFADAVKEIRDVGGRTVTFRHRKMQP</sequence>
<protein>
    <recommendedName>
        <fullName>Probable histidinol-phosphatase</fullName>
        <shortName>HolPase</shortName>
        <ecNumber>3.1.3.15</ecNumber>
    </recommendedName>
</protein>
<organism>
    <name type="scientific">Deinococcus radiodurans (strain ATCC 13939 / DSM 20539 / JCM 16871 / CCUG 27074 / LMG 4051 / NBRC 15346 / NCIMB 9279 / VKM B-1422 / R1)</name>
    <dbReference type="NCBI Taxonomy" id="243230"/>
    <lineage>
        <taxon>Bacteria</taxon>
        <taxon>Thermotogati</taxon>
        <taxon>Deinococcota</taxon>
        <taxon>Deinococci</taxon>
        <taxon>Deinococcales</taxon>
        <taxon>Deinococcaceae</taxon>
        <taxon>Deinococcus</taxon>
    </lineage>
</organism>
<evidence type="ECO:0000305" key="1"/>
<reference key="1">
    <citation type="journal article" date="1999" name="Science">
        <title>Genome sequence of the radioresistant bacterium Deinococcus radiodurans R1.</title>
        <authorList>
            <person name="White O."/>
            <person name="Eisen J.A."/>
            <person name="Heidelberg J.F."/>
            <person name="Hickey E.K."/>
            <person name="Peterson J.D."/>
            <person name="Dodson R.J."/>
            <person name="Haft D.H."/>
            <person name="Gwinn M.L."/>
            <person name="Nelson W.C."/>
            <person name="Richardson D.L."/>
            <person name="Moffat K.S."/>
            <person name="Qin H."/>
            <person name="Jiang L."/>
            <person name="Pamphile W."/>
            <person name="Crosby M."/>
            <person name="Shen M."/>
            <person name="Vamathevan J.J."/>
            <person name="Lam P."/>
            <person name="McDonald L.A."/>
            <person name="Utterback T.R."/>
            <person name="Zalewski C."/>
            <person name="Makarova K.S."/>
            <person name="Aravind L."/>
            <person name="Daly M.J."/>
            <person name="Minton K.W."/>
            <person name="Fleischmann R.D."/>
            <person name="Ketchum K.A."/>
            <person name="Nelson K.E."/>
            <person name="Salzberg S.L."/>
            <person name="Smith H.O."/>
            <person name="Venter J.C."/>
            <person name="Fraser C.M."/>
        </authorList>
    </citation>
    <scope>NUCLEOTIDE SEQUENCE [LARGE SCALE GENOMIC DNA]</scope>
    <source>
        <strain>ATCC 13939 / DSM 20539 / JCM 16871 / CCUG 27074 / LMG 4051 / NBRC 15346 / NCIMB 9279 / VKM B-1422 / R1</strain>
    </source>
</reference>
<comment type="catalytic activity">
    <reaction>
        <text>L-histidinol phosphate + H2O = L-histidinol + phosphate</text>
        <dbReference type="Rhea" id="RHEA:14465"/>
        <dbReference type="ChEBI" id="CHEBI:15377"/>
        <dbReference type="ChEBI" id="CHEBI:43474"/>
        <dbReference type="ChEBI" id="CHEBI:57699"/>
        <dbReference type="ChEBI" id="CHEBI:57980"/>
        <dbReference type="EC" id="3.1.3.15"/>
    </reaction>
</comment>
<comment type="pathway">
    <text>Amino-acid biosynthesis; L-histidine biosynthesis; L-histidine from 5-phospho-alpha-D-ribose 1-diphosphate: step 8/9.</text>
</comment>
<comment type="similarity">
    <text evidence="1">Belongs to the PHP hydrolase family. HisK subfamily.</text>
</comment>
<name>HIS9_DEIRA</name>
<proteinExistence type="inferred from homology"/>
<keyword id="KW-0028">Amino-acid biosynthesis</keyword>
<keyword id="KW-0368">Histidine biosynthesis</keyword>
<keyword id="KW-0378">Hydrolase</keyword>
<keyword id="KW-1185">Reference proteome</keyword>
<dbReference type="EC" id="3.1.3.15"/>
<dbReference type="EMBL" id="AE000513">
    <property type="protein sequence ID" value="AAF10049.1"/>
    <property type="molecule type" value="Genomic_DNA"/>
</dbReference>
<dbReference type="PIR" id="F75515">
    <property type="entry name" value="F75515"/>
</dbReference>
<dbReference type="RefSeq" id="NP_294193.1">
    <property type="nucleotide sequence ID" value="NC_001263.1"/>
</dbReference>
<dbReference type="RefSeq" id="WP_010887115.1">
    <property type="nucleotide sequence ID" value="NC_001263.1"/>
</dbReference>
<dbReference type="SMR" id="Q9RX45"/>
<dbReference type="FunCoup" id="Q9RX45">
    <property type="interactions" value="104"/>
</dbReference>
<dbReference type="STRING" id="243230.DR_0470"/>
<dbReference type="PaxDb" id="243230-DR_0470"/>
<dbReference type="EnsemblBacteria" id="AAF10049">
    <property type="protein sequence ID" value="AAF10049"/>
    <property type="gene ID" value="DR_0470"/>
</dbReference>
<dbReference type="GeneID" id="69516706"/>
<dbReference type="KEGG" id="dra:DR_0470"/>
<dbReference type="PATRIC" id="fig|243230.17.peg.648"/>
<dbReference type="eggNOG" id="COG1387">
    <property type="taxonomic scope" value="Bacteria"/>
</dbReference>
<dbReference type="HOGENOM" id="CLU_054611_2_0_0"/>
<dbReference type="InParanoid" id="Q9RX45"/>
<dbReference type="OrthoDB" id="9775255at2"/>
<dbReference type="UniPathway" id="UPA00031">
    <property type="reaction ID" value="UER00013"/>
</dbReference>
<dbReference type="Proteomes" id="UP000002524">
    <property type="component" value="Chromosome 1"/>
</dbReference>
<dbReference type="GO" id="GO:0004401">
    <property type="term" value="F:histidinol-phosphatase activity"/>
    <property type="evidence" value="ECO:0000318"/>
    <property type="project" value="GO_Central"/>
</dbReference>
<dbReference type="GO" id="GO:0000105">
    <property type="term" value="P:L-histidine biosynthetic process"/>
    <property type="evidence" value="ECO:0000318"/>
    <property type="project" value="GO_Central"/>
</dbReference>
<dbReference type="CDD" id="cd12110">
    <property type="entry name" value="PHP_HisPPase_Hisj_like"/>
    <property type="match status" value="1"/>
</dbReference>
<dbReference type="Gene3D" id="3.20.20.140">
    <property type="entry name" value="Metal-dependent hydrolases"/>
    <property type="match status" value="1"/>
</dbReference>
<dbReference type="InterPro" id="IPR010140">
    <property type="entry name" value="Histidinol_P_phosphatase_HisJ"/>
</dbReference>
<dbReference type="InterPro" id="IPR004013">
    <property type="entry name" value="PHP_dom"/>
</dbReference>
<dbReference type="InterPro" id="IPR016195">
    <property type="entry name" value="Pol/histidinol_Pase-like"/>
</dbReference>
<dbReference type="NCBIfam" id="TIGR01856">
    <property type="entry name" value="hisJ_fam"/>
    <property type="match status" value="1"/>
</dbReference>
<dbReference type="NCBIfam" id="NF005596">
    <property type="entry name" value="PRK07328.1"/>
    <property type="match status" value="1"/>
</dbReference>
<dbReference type="PANTHER" id="PTHR21039">
    <property type="entry name" value="HISTIDINOL PHOSPHATASE-RELATED"/>
    <property type="match status" value="1"/>
</dbReference>
<dbReference type="PANTHER" id="PTHR21039:SF0">
    <property type="entry name" value="HISTIDINOL-PHOSPHATASE"/>
    <property type="match status" value="1"/>
</dbReference>
<dbReference type="Pfam" id="PF02811">
    <property type="entry name" value="PHP"/>
    <property type="match status" value="1"/>
</dbReference>
<dbReference type="Pfam" id="PF13263">
    <property type="entry name" value="PHP_C"/>
    <property type="match status" value="1"/>
</dbReference>
<dbReference type="SUPFAM" id="SSF89550">
    <property type="entry name" value="PHP domain-like"/>
    <property type="match status" value="1"/>
</dbReference>